<keyword id="KW-0067">ATP-binding</keyword>
<keyword id="KW-0436">Ligase</keyword>
<keyword id="KW-0460">Magnesium</keyword>
<keyword id="KW-0479">Metal-binding</keyword>
<keyword id="KW-0520">NAD</keyword>
<keyword id="KW-0547">Nucleotide-binding</keyword>
<keyword id="KW-1185">Reference proteome</keyword>
<dbReference type="EC" id="6.3.1.5" evidence="1"/>
<dbReference type="EMBL" id="AE006641">
    <property type="protein sequence ID" value="AAK42347.1"/>
    <property type="status" value="ALT_INIT"/>
    <property type="molecule type" value="Genomic_DNA"/>
</dbReference>
<dbReference type="PIR" id="D90386">
    <property type="entry name" value="D90386"/>
</dbReference>
<dbReference type="SMR" id="Q97WN9"/>
<dbReference type="FunCoup" id="Q97WN9">
    <property type="interactions" value="100"/>
</dbReference>
<dbReference type="STRING" id="273057.SSO2172"/>
<dbReference type="PaxDb" id="273057-SSO2172"/>
<dbReference type="EnsemblBacteria" id="AAK42347">
    <property type="protein sequence ID" value="AAK42347"/>
    <property type="gene ID" value="SSO2172"/>
</dbReference>
<dbReference type="KEGG" id="sso:SSO2172"/>
<dbReference type="PATRIC" id="fig|273057.12.peg.2267"/>
<dbReference type="eggNOG" id="arCOG00069">
    <property type="taxonomic scope" value="Archaea"/>
</dbReference>
<dbReference type="HOGENOM" id="CLU_059327_1_1_2"/>
<dbReference type="InParanoid" id="Q97WN9"/>
<dbReference type="PhylomeDB" id="Q97WN9"/>
<dbReference type="UniPathway" id="UPA00253">
    <property type="reaction ID" value="UER00333"/>
</dbReference>
<dbReference type="Proteomes" id="UP000001974">
    <property type="component" value="Chromosome"/>
</dbReference>
<dbReference type="GO" id="GO:0005737">
    <property type="term" value="C:cytoplasm"/>
    <property type="evidence" value="ECO:0000318"/>
    <property type="project" value="GO_Central"/>
</dbReference>
<dbReference type="GO" id="GO:0005524">
    <property type="term" value="F:ATP binding"/>
    <property type="evidence" value="ECO:0007669"/>
    <property type="project" value="UniProtKB-UniRule"/>
</dbReference>
<dbReference type="GO" id="GO:0004359">
    <property type="term" value="F:glutaminase activity"/>
    <property type="evidence" value="ECO:0007669"/>
    <property type="project" value="InterPro"/>
</dbReference>
<dbReference type="GO" id="GO:0046872">
    <property type="term" value="F:metal ion binding"/>
    <property type="evidence" value="ECO:0007669"/>
    <property type="project" value="UniProtKB-KW"/>
</dbReference>
<dbReference type="GO" id="GO:0003952">
    <property type="term" value="F:NAD+ synthase (glutamine-hydrolyzing) activity"/>
    <property type="evidence" value="ECO:0007669"/>
    <property type="project" value="InterPro"/>
</dbReference>
<dbReference type="GO" id="GO:0008795">
    <property type="term" value="F:NAD+ synthase activity"/>
    <property type="evidence" value="ECO:0007669"/>
    <property type="project" value="UniProtKB-UniRule"/>
</dbReference>
<dbReference type="GO" id="GO:0009435">
    <property type="term" value="P:NAD biosynthetic process"/>
    <property type="evidence" value="ECO:0000318"/>
    <property type="project" value="GO_Central"/>
</dbReference>
<dbReference type="CDD" id="cd00553">
    <property type="entry name" value="NAD_synthase"/>
    <property type="match status" value="1"/>
</dbReference>
<dbReference type="FunFam" id="3.40.50.620:FF:000106">
    <property type="entry name" value="Glutamine-dependent NAD(+) synthetase"/>
    <property type="match status" value="1"/>
</dbReference>
<dbReference type="Gene3D" id="3.40.50.620">
    <property type="entry name" value="HUPs"/>
    <property type="match status" value="1"/>
</dbReference>
<dbReference type="HAMAP" id="MF_00193">
    <property type="entry name" value="NadE_ammonia_dep"/>
    <property type="match status" value="1"/>
</dbReference>
<dbReference type="InterPro" id="IPR022310">
    <property type="entry name" value="NAD/GMP_synthase"/>
</dbReference>
<dbReference type="InterPro" id="IPR003694">
    <property type="entry name" value="NAD_synthase"/>
</dbReference>
<dbReference type="InterPro" id="IPR022926">
    <property type="entry name" value="NH(3)-dep_NAD(+)_synth"/>
</dbReference>
<dbReference type="InterPro" id="IPR014729">
    <property type="entry name" value="Rossmann-like_a/b/a_fold"/>
</dbReference>
<dbReference type="NCBIfam" id="TIGR00552">
    <property type="entry name" value="nadE"/>
    <property type="match status" value="1"/>
</dbReference>
<dbReference type="NCBIfam" id="NF010587">
    <property type="entry name" value="PRK13980.1"/>
    <property type="match status" value="1"/>
</dbReference>
<dbReference type="PANTHER" id="PTHR23090:SF9">
    <property type="entry name" value="GLUTAMINE-DEPENDENT NAD(+) SYNTHETASE"/>
    <property type="match status" value="1"/>
</dbReference>
<dbReference type="PANTHER" id="PTHR23090">
    <property type="entry name" value="NH 3 /GLUTAMINE-DEPENDENT NAD + SYNTHETASE"/>
    <property type="match status" value="1"/>
</dbReference>
<dbReference type="Pfam" id="PF02540">
    <property type="entry name" value="NAD_synthase"/>
    <property type="match status" value="1"/>
</dbReference>
<dbReference type="SUPFAM" id="SSF52402">
    <property type="entry name" value="Adenine nucleotide alpha hydrolases-like"/>
    <property type="match status" value="1"/>
</dbReference>
<gene>
    <name evidence="1" type="primary">nadE</name>
    <name type="ordered locus">SSO2172</name>
</gene>
<sequence length="278" mass="31593">MHEYIRKSLTIDCEAVTNYIVERIREYLEFSNKKGGVIGVSGGVDSAVTATLLAKATDNFFILLMPSSSTPKIDLDDSFEMIKFLNAQNKYKLINIDEIVKSFSNKIETENKYIIGNIKARVRMIILYAYAQMLDYLVVGTGDKSELLLGYFTKYGDGGVDVLPIGDLYKTQVRMLGKCLGLPERIVTKPSSPALWEGQTAEGELGIDYETIDSILYLRFDEMRSEDEIVKMLGIPIDIVKKVDRLVKISQHKRLPPEIFRLSGRAINSDWRFPRRWA</sequence>
<evidence type="ECO:0000255" key="1">
    <source>
        <dbReference type="HAMAP-Rule" id="MF_00193"/>
    </source>
</evidence>
<evidence type="ECO:0000305" key="2"/>
<protein>
    <recommendedName>
        <fullName evidence="1">NH(3)-dependent NAD(+) synthetase</fullName>
        <ecNumber evidence="1">6.3.1.5</ecNumber>
    </recommendedName>
</protein>
<comment type="function">
    <text evidence="1">Catalyzes the ATP-dependent amidation of deamido-NAD to form NAD. Uses ammonia as a nitrogen source.</text>
</comment>
<comment type="catalytic activity">
    <reaction evidence="1">
        <text>deamido-NAD(+) + NH4(+) + ATP = AMP + diphosphate + NAD(+) + H(+)</text>
        <dbReference type="Rhea" id="RHEA:21188"/>
        <dbReference type="ChEBI" id="CHEBI:15378"/>
        <dbReference type="ChEBI" id="CHEBI:28938"/>
        <dbReference type="ChEBI" id="CHEBI:30616"/>
        <dbReference type="ChEBI" id="CHEBI:33019"/>
        <dbReference type="ChEBI" id="CHEBI:57540"/>
        <dbReference type="ChEBI" id="CHEBI:58437"/>
        <dbReference type="ChEBI" id="CHEBI:456215"/>
        <dbReference type="EC" id="6.3.1.5"/>
    </reaction>
</comment>
<comment type="pathway">
    <text evidence="1">Cofactor biosynthesis; NAD(+) biosynthesis; NAD(+) from deamido-NAD(+) (ammonia route): step 1/1.</text>
</comment>
<comment type="subunit">
    <text evidence="1">Homodimer.</text>
</comment>
<comment type="similarity">
    <text evidence="1">Belongs to the NAD synthetase family.</text>
</comment>
<comment type="sequence caution" evidence="2">
    <conflict type="erroneous initiation">
        <sequence resource="EMBL-CDS" id="AAK42347"/>
    </conflict>
</comment>
<reference key="1">
    <citation type="journal article" date="2001" name="Proc. Natl. Acad. Sci. U.S.A.">
        <title>The complete genome of the crenarchaeon Sulfolobus solfataricus P2.</title>
        <authorList>
            <person name="She Q."/>
            <person name="Singh R.K."/>
            <person name="Confalonieri F."/>
            <person name="Zivanovic Y."/>
            <person name="Allard G."/>
            <person name="Awayez M.J."/>
            <person name="Chan-Weiher C.C.-Y."/>
            <person name="Clausen I.G."/>
            <person name="Curtis B.A."/>
            <person name="De Moors A."/>
            <person name="Erauso G."/>
            <person name="Fletcher C."/>
            <person name="Gordon P.M.K."/>
            <person name="Heikamp-de Jong I."/>
            <person name="Jeffries A.C."/>
            <person name="Kozera C.J."/>
            <person name="Medina N."/>
            <person name="Peng X."/>
            <person name="Thi-Ngoc H.P."/>
            <person name="Redder P."/>
            <person name="Schenk M.E."/>
            <person name="Theriault C."/>
            <person name="Tolstrup N."/>
            <person name="Charlebois R.L."/>
            <person name="Doolittle W.F."/>
            <person name="Duguet M."/>
            <person name="Gaasterland T."/>
            <person name="Garrett R.A."/>
            <person name="Ragan M.A."/>
            <person name="Sensen C.W."/>
            <person name="Van der Oost J."/>
        </authorList>
    </citation>
    <scope>NUCLEOTIDE SEQUENCE [LARGE SCALE GENOMIC DNA]</scope>
    <source>
        <strain>ATCC 35092 / DSM 1617 / JCM 11322 / P2</strain>
    </source>
</reference>
<feature type="chain" id="PRO_0000152235" description="NH(3)-dependent NAD(+) synthetase">
    <location>
        <begin position="1"/>
        <end position="278"/>
    </location>
</feature>
<feature type="binding site" evidence="1">
    <location>
        <begin position="39"/>
        <end position="46"/>
    </location>
    <ligand>
        <name>ATP</name>
        <dbReference type="ChEBI" id="CHEBI:30616"/>
    </ligand>
</feature>
<feature type="binding site" evidence="1">
    <location>
        <position position="45"/>
    </location>
    <ligand>
        <name>Mg(2+)</name>
        <dbReference type="ChEBI" id="CHEBI:18420"/>
    </ligand>
</feature>
<feature type="binding site" evidence="1">
    <location>
        <position position="121"/>
    </location>
    <ligand>
        <name>deamido-NAD(+)</name>
        <dbReference type="ChEBI" id="CHEBI:58437"/>
    </ligand>
</feature>
<feature type="binding site" evidence="1">
    <location>
        <position position="141"/>
    </location>
    <ligand>
        <name>ATP</name>
        <dbReference type="ChEBI" id="CHEBI:30616"/>
    </ligand>
</feature>
<feature type="binding site" evidence="1">
    <location>
        <position position="146"/>
    </location>
    <ligand>
        <name>Mg(2+)</name>
        <dbReference type="ChEBI" id="CHEBI:18420"/>
    </ligand>
</feature>
<feature type="binding site" evidence="1">
    <location>
        <position position="154"/>
    </location>
    <ligand>
        <name>deamido-NAD(+)</name>
        <dbReference type="ChEBI" id="CHEBI:58437"/>
    </ligand>
</feature>
<feature type="binding site" evidence="1">
    <location>
        <position position="161"/>
    </location>
    <ligand>
        <name>deamido-NAD(+)</name>
        <dbReference type="ChEBI" id="CHEBI:58437"/>
    </ligand>
</feature>
<feature type="binding site" evidence="1">
    <location>
        <position position="170"/>
    </location>
    <ligand>
        <name>ATP</name>
        <dbReference type="ChEBI" id="CHEBI:30616"/>
    </ligand>
</feature>
<feature type="binding site" evidence="1">
    <location>
        <position position="192"/>
    </location>
    <ligand>
        <name>ATP</name>
        <dbReference type="ChEBI" id="CHEBI:30616"/>
    </ligand>
</feature>
<feature type="binding site" evidence="1">
    <location>
        <begin position="252"/>
        <end position="253"/>
    </location>
    <ligand>
        <name>deamido-NAD(+)</name>
        <dbReference type="ChEBI" id="CHEBI:58437"/>
    </ligand>
</feature>
<organism>
    <name type="scientific">Saccharolobus solfataricus (strain ATCC 35092 / DSM 1617 / JCM 11322 / P2)</name>
    <name type="common">Sulfolobus solfataricus</name>
    <dbReference type="NCBI Taxonomy" id="273057"/>
    <lineage>
        <taxon>Archaea</taxon>
        <taxon>Thermoproteota</taxon>
        <taxon>Thermoprotei</taxon>
        <taxon>Sulfolobales</taxon>
        <taxon>Sulfolobaceae</taxon>
        <taxon>Saccharolobus</taxon>
    </lineage>
</organism>
<name>NADE_SACS2</name>
<accession>Q97WN9</accession>
<proteinExistence type="inferred from homology"/>